<sequence length="248" mass="27831">MTKLKLLALGVLIATSAGVAHAEGKFSLGAGVGVVEHPYKDYDTDVYPVPVINYEGDNFWFRGLGGGYYLWNDATDKLSITAYWSPLYFKAKDSGDHQMRHLDDRKSTMMAGLSYAHFTQYGYLRTTLAGDTLDNSNGIVWDMAWLYRYTNGGLTVTPGIGVQWNSENQNEYYYGVSRKESARSGLRGYNPNDSWSPYLELSASYNFLGDWSVYGTARYTRLSDEVTDSPMVDKSWTGLISTGITYKF</sequence>
<proteinExistence type="inferred from homology"/>
<reference key="1">
    <citation type="journal article" date="2002" name="Nucleic Acids Res.">
        <title>Genome sequence of Shigella flexneri 2a: insights into pathogenicity through comparison with genomes of Escherichia coli K12 and O157.</title>
        <authorList>
            <person name="Jin Q."/>
            <person name="Yuan Z."/>
            <person name="Xu J."/>
            <person name="Wang Y."/>
            <person name="Shen Y."/>
            <person name="Lu W."/>
            <person name="Wang J."/>
            <person name="Liu H."/>
            <person name="Yang J."/>
            <person name="Yang F."/>
            <person name="Zhang X."/>
            <person name="Zhang J."/>
            <person name="Yang G."/>
            <person name="Wu H."/>
            <person name="Qu D."/>
            <person name="Dong J."/>
            <person name="Sun L."/>
            <person name="Xue Y."/>
            <person name="Zhao A."/>
            <person name="Gao Y."/>
            <person name="Zhu J."/>
            <person name="Kan B."/>
            <person name="Ding K."/>
            <person name="Chen S."/>
            <person name="Cheng H."/>
            <person name="Yao Z."/>
            <person name="He B."/>
            <person name="Chen R."/>
            <person name="Ma D."/>
            <person name="Qiang B."/>
            <person name="Wen Y."/>
            <person name="Hou Y."/>
            <person name="Yu J."/>
        </authorList>
    </citation>
    <scope>NUCLEOTIDE SEQUENCE [LARGE SCALE GENOMIC DNA]</scope>
    <source>
        <strain>301 / Serotype 2a</strain>
    </source>
</reference>
<reference key="2">
    <citation type="journal article" date="2003" name="Infect. Immun.">
        <title>Complete genome sequence and comparative genomics of Shigella flexneri serotype 2a strain 2457T.</title>
        <authorList>
            <person name="Wei J."/>
            <person name="Goldberg M.B."/>
            <person name="Burland V."/>
            <person name="Venkatesan M.M."/>
            <person name="Deng W."/>
            <person name="Fournier G."/>
            <person name="Mayhew G.F."/>
            <person name="Plunkett G. III"/>
            <person name="Rose D.J."/>
            <person name="Darling A."/>
            <person name="Mau B."/>
            <person name="Perna N.T."/>
            <person name="Payne S.M."/>
            <person name="Runyen-Janecky L.J."/>
            <person name="Zhou S."/>
            <person name="Schwartz D.C."/>
            <person name="Blattner F.R."/>
        </authorList>
    </citation>
    <scope>NUCLEOTIDE SEQUENCE [LARGE SCALE GENOMIC DNA]</scope>
    <source>
        <strain>ATCC 700930 / 2457T / Serotype 2a</strain>
    </source>
</reference>
<feature type="signal peptide" evidence="1">
    <location>
        <begin position="1"/>
        <end position="22"/>
    </location>
</feature>
<feature type="chain" id="PRO_0000019093" description="MltA-interacting protein">
    <location>
        <begin position="23"/>
        <end position="248"/>
    </location>
</feature>
<gene>
    <name type="primary">mipA</name>
    <name type="ordered locus">SF1441</name>
    <name type="ordered locus">S1556</name>
</gene>
<comment type="function">
    <text evidence="1">May serve as a scaffold protein required for the formation of a complex with MrcB/PonB and MltA, this complex could play a role in enlargement and septation of the murein sacculus.</text>
</comment>
<comment type="subcellular location">
    <subcellularLocation>
        <location evidence="2">Cell outer membrane</location>
    </subcellularLocation>
</comment>
<comment type="similarity">
    <text evidence="2">Belongs to the MipA/OmpV family.</text>
</comment>
<keyword id="KW-0998">Cell outer membrane</keyword>
<keyword id="KW-0472">Membrane</keyword>
<keyword id="KW-1185">Reference proteome</keyword>
<keyword id="KW-0732">Signal</keyword>
<protein>
    <recommendedName>
        <fullName>MltA-interacting protein</fullName>
    </recommendedName>
</protein>
<organism>
    <name type="scientific">Shigella flexneri</name>
    <dbReference type="NCBI Taxonomy" id="623"/>
    <lineage>
        <taxon>Bacteria</taxon>
        <taxon>Pseudomonadati</taxon>
        <taxon>Pseudomonadota</taxon>
        <taxon>Gammaproteobacteria</taxon>
        <taxon>Enterobacterales</taxon>
        <taxon>Enterobacteriaceae</taxon>
        <taxon>Shigella</taxon>
    </lineage>
</organism>
<evidence type="ECO:0000250" key="1"/>
<evidence type="ECO:0000305" key="2"/>
<dbReference type="EMBL" id="AE005674">
    <property type="protein sequence ID" value="AAN43039.1"/>
    <property type="molecule type" value="Genomic_DNA"/>
</dbReference>
<dbReference type="EMBL" id="AE014073">
    <property type="protein sequence ID" value="AAP16934.1"/>
    <property type="molecule type" value="Genomic_DNA"/>
</dbReference>
<dbReference type="RefSeq" id="WP_000163771.1">
    <property type="nucleotide sequence ID" value="NZ_WPGW01000090.1"/>
</dbReference>
<dbReference type="STRING" id="198214.SF1441"/>
<dbReference type="PaxDb" id="198214-SF1441"/>
<dbReference type="DNASU" id="1080449"/>
<dbReference type="GeneID" id="75171849"/>
<dbReference type="KEGG" id="sfl:SF1441"/>
<dbReference type="KEGG" id="sfx:S1556"/>
<dbReference type="PATRIC" id="fig|198214.7.peg.1697"/>
<dbReference type="HOGENOM" id="CLU_063465_3_0_6"/>
<dbReference type="Proteomes" id="UP000001006">
    <property type="component" value="Chromosome"/>
</dbReference>
<dbReference type="Proteomes" id="UP000002673">
    <property type="component" value="Chromosome"/>
</dbReference>
<dbReference type="GO" id="GO:0009279">
    <property type="term" value="C:cell outer membrane"/>
    <property type="evidence" value="ECO:0007669"/>
    <property type="project" value="UniProtKB-SubCell"/>
</dbReference>
<dbReference type="GO" id="GO:0009252">
    <property type="term" value="P:peptidoglycan biosynthetic process"/>
    <property type="evidence" value="ECO:0007669"/>
    <property type="project" value="TreeGrafter"/>
</dbReference>
<dbReference type="InterPro" id="IPR010583">
    <property type="entry name" value="MipA"/>
</dbReference>
<dbReference type="PANTHER" id="PTHR38776">
    <property type="entry name" value="MLTA-INTERACTING PROTEIN-RELATED"/>
    <property type="match status" value="1"/>
</dbReference>
<dbReference type="PANTHER" id="PTHR38776:SF1">
    <property type="entry name" value="MLTA-INTERACTING PROTEIN-RELATED"/>
    <property type="match status" value="1"/>
</dbReference>
<dbReference type="Pfam" id="PF06629">
    <property type="entry name" value="MipA"/>
    <property type="match status" value="1"/>
</dbReference>
<accession>P0A909</accession>
<accession>O07962</accession>
<accession>P77486</accession>
<name>MIPA_SHIFL</name>